<dbReference type="EMBL" id="AB005297">
    <property type="protein sequence ID" value="BAA23647.1"/>
    <property type="molecule type" value="mRNA"/>
</dbReference>
<dbReference type="EMBL" id="AC139676">
    <property type="status" value="NOT_ANNOTATED_CDS"/>
    <property type="molecule type" value="Genomic_DNA"/>
</dbReference>
<dbReference type="CCDS" id="CCDS64985.1"/>
<dbReference type="PIR" id="T00026">
    <property type="entry name" value="T00026"/>
</dbReference>
<dbReference type="RefSeq" id="NP_001693.2">
    <property type="nucleotide sequence ID" value="NM_001702.3"/>
</dbReference>
<dbReference type="RefSeq" id="XP_011515501.1">
    <property type="nucleotide sequence ID" value="XM_011517199.2"/>
</dbReference>
<dbReference type="SMR" id="O14514"/>
<dbReference type="BioGRID" id="107051">
    <property type="interactions" value="77"/>
</dbReference>
<dbReference type="DIP" id="DIP-40884N"/>
<dbReference type="FunCoup" id="O14514">
    <property type="interactions" value="183"/>
</dbReference>
<dbReference type="IntAct" id="O14514">
    <property type="interactions" value="13"/>
</dbReference>
<dbReference type="MINT" id="O14514"/>
<dbReference type="STRING" id="9606.ENSP00000430945"/>
<dbReference type="MEROPS" id="P02.041"/>
<dbReference type="GlyCosmos" id="O14514">
    <property type="glycosylation" value="7 sites, No reported glycans"/>
</dbReference>
<dbReference type="GlyGen" id="O14514">
    <property type="glycosylation" value="10 sites, 2 N-linked glycans (2 sites), 1 O-linked glycan (1 site)"/>
</dbReference>
<dbReference type="iPTMnet" id="O14514"/>
<dbReference type="PhosphoSitePlus" id="O14514"/>
<dbReference type="BioMuta" id="ADGRB1"/>
<dbReference type="jPOST" id="O14514"/>
<dbReference type="MassIVE" id="O14514"/>
<dbReference type="PaxDb" id="9606-ENSP00000430945"/>
<dbReference type="PeptideAtlas" id="O14514"/>
<dbReference type="ProteomicsDB" id="48061"/>
<dbReference type="Antibodypedia" id="7346">
    <property type="antibodies" value="399 antibodies from 32 providers"/>
</dbReference>
<dbReference type="CPTC" id="O14514">
    <property type="antibodies" value="3 antibodies"/>
</dbReference>
<dbReference type="DNASU" id="575"/>
<dbReference type="Ensembl" id="ENST00000517894.6">
    <property type="protein sequence ID" value="ENSP00000430945.1"/>
    <property type="gene ID" value="ENSG00000181790.13"/>
</dbReference>
<dbReference type="GeneID" id="575"/>
<dbReference type="KEGG" id="hsa:575"/>
<dbReference type="MANE-Select" id="ENST00000517894.6">
    <property type="protein sequence ID" value="ENSP00000430945.1"/>
    <property type="RefSeq nucleotide sequence ID" value="NM_001702.3"/>
    <property type="RefSeq protein sequence ID" value="NP_001693.2"/>
</dbReference>
<dbReference type="UCSC" id="uc003ywm.4">
    <property type="organism name" value="human"/>
</dbReference>
<dbReference type="AGR" id="HGNC:943"/>
<dbReference type="CTD" id="575"/>
<dbReference type="DisGeNET" id="575"/>
<dbReference type="GeneCards" id="ADGRB1"/>
<dbReference type="HGNC" id="HGNC:943">
    <property type="gene designation" value="ADGRB1"/>
</dbReference>
<dbReference type="HPA" id="ENSG00000181790">
    <property type="expression patterns" value="Tissue enriched (brain)"/>
</dbReference>
<dbReference type="MIM" id="602682">
    <property type="type" value="gene"/>
</dbReference>
<dbReference type="neXtProt" id="NX_O14514"/>
<dbReference type="OpenTargets" id="ENSG00000181790"/>
<dbReference type="PharmGKB" id="PA25247"/>
<dbReference type="VEuPathDB" id="HostDB:ENSG00000181790"/>
<dbReference type="eggNOG" id="ENOG502QRTN">
    <property type="taxonomic scope" value="Eukaryota"/>
</dbReference>
<dbReference type="GeneTree" id="ENSGT00940000157432"/>
<dbReference type="HOGENOM" id="CLU_003751_1_0_1"/>
<dbReference type="InParanoid" id="O14514"/>
<dbReference type="OMA" id="SAMPRWG"/>
<dbReference type="OrthoDB" id="5989160at2759"/>
<dbReference type="PAN-GO" id="O14514">
    <property type="GO annotations" value="6 GO annotations based on evolutionary models"/>
</dbReference>
<dbReference type="PhylomeDB" id="O14514"/>
<dbReference type="TreeFam" id="TF331634"/>
<dbReference type="PathwayCommons" id="O14514"/>
<dbReference type="SignaLink" id="O14514"/>
<dbReference type="BioGRID-ORCS" id="575">
    <property type="hits" value="9 hits in 1134 CRISPR screens"/>
</dbReference>
<dbReference type="CD-CODE" id="FB4E32DD">
    <property type="entry name" value="Presynaptic clusters and postsynaptic densities"/>
</dbReference>
<dbReference type="ChiTaRS" id="ADGRB1">
    <property type="organism name" value="human"/>
</dbReference>
<dbReference type="GeneWiki" id="Brain-specific_angiogenesis_inhibitor_1"/>
<dbReference type="GenomeRNAi" id="575"/>
<dbReference type="Pharos" id="O14514">
    <property type="development level" value="Tbio"/>
</dbReference>
<dbReference type="PRO" id="PR:O14514"/>
<dbReference type="Proteomes" id="UP000005640">
    <property type="component" value="Chromosome 8"/>
</dbReference>
<dbReference type="RNAct" id="O14514">
    <property type="molecule type" value="protein"/>
</dbReference>
<dbReference type="Bgee" id="ENSG00000181790">
    <property type="expression patterns" value="Expressed in right frontal lobe and 112 other cell types or tissues"/>
</dbReference>
<dbReference type="ExpressionAtlas" id="O14514">
    <property type="expression patterns" value="baseline and differential"/>
</dbReference>
<dbReference type="GO" id="GO:0005911">
    <property type="term" value="C:cell-cell junction"/>
    <property type="evidence" value="ECO:0000304"/>
    <property type="project" value="ProtInc"/>
</dbReference>
<dbReference type="GO" id="GO:0030425">
    <property type="term" value="C:dendrite"/>
    <property type="evidence" value="ECO:0000250"/>
    <property type="project" value="UniProtKB"/>
</dbReference>
<dbReference type="GO" id="GO:0043197">
    <property type="term" value="C:dendritic spine"/>
    <property type="evidence" value="ECO:0007669"/>
    <property type="project" value="UniProtKB-SubCell"/>
</dbReference>
<dbReference type="GO" id="GO:0005615">
    <property type="term" value="C:extracellular space"/>
    <property type="evidence" value="ECO:0000314"/>
    <property type="project" value="UniProtKB"/>
</dbReference>
<dbReference type="GO" id="GO:0005925">
    <property type="term" value="C:focal adhesion"/>
    <property type="evidence" value="ECO:0000250"/>
    <property type="project" value="UniProtKB"/>
</dbReference>
<dbReference type="GO" id="GO:0016020">
    <property type="term" value="C:membrane"/>
    <property type="evidence" value="ECO:0000304"/>
    <property type="project" value="GDB"/>
</dbReference>
<dbReference type="GO" id="GO:0048471">
    <property type="term" value="C:perinuclear region of cytoplasm"/>
    <property type="evidence" value="ECO:0000314"/>
    <property type="project" value="UniProtKB"/>
</dbReference>
<dbReference type="GO" id="GO:0001891">
    <property type="term" value="C:phagocytic cup"/>
    <property type="evidence" value="ECO:0000250"/>
    <property type="project" value="UniProtKB"/>
</dbReference>
<dbReference type="GO" id="GO:0005886">
    <property type="term" value="C:plasma membrane"/>
    <property type="evidence" value="ECO:0000314"/>
    <property type="project" value="UniProtKB"/>
</dbReference>
<dbReference type="GO" id="GO:0014069">
    <property type="term" value="C:postsynaptic density"/>
    <property type="evidence" value="ECO:0000250"/>
    <property type="project" value="UniProtKB"/>
</dbReference>
<dbReference type="GO" id="GO:0004930">
    <property type="term" value="F:G protein-coupled receptor activity"/>
    <property type="evidence" value="ECO:0000314"/>
    <property type="project" value="UniProtKB"/>
</dbReference>
<dbReference type="GO" id="GO:0001530">
    <property type="term" value="F:lipopolysaccharide binding"/>
    <property type="evidence" value="ECO:0000250"/>
    <property type="project" value="UniProtKB"/>
</dbReference>
<dbReference type="GO" id="GO:0030165">
    <property type="term" value="F:PDZ domain binding"/>
    <property type="evidence" value="ECO:0007669"/>
    <property type="project" value="Ensembl"/>
</dbReference>
<dbReference type="GO" id="GO:0001786">
    <property type="term" value="F:phosphatidylserine binding"/>
    <property type="evidence" value="ECO:0000250"/>
    <property type="project" value="UniProtKB"/>
</dbReference>
<dbReference type="GO" id="GO:0007189">
    <property type="term" value="P:adenylate cyclase-activating G protein-coupled receptor signaling pathway"/>
    <property type="evidence" value="ECO:0000318"/>
    <property type="project" value="GO_Central"/>
</dbReference>
<dbReference type="GO" id="GO:0043277">
    <property type="term" value="P:apoptotic cell clearance"/>
    <property type="evidence" value="ECO:0000315"/>
    <property type="project" value="UniProtKB"/>
</dbReference>
<dbReference type="GO" id="GO:0007409">
    <property type="term" value="P:axonogenesis"/>
    <property type="evidence" value="ECO:0000304"/>
    <property type="project" value="ProtInc"/>
</dbReference>
<dbReference type="GO" id="GO:0007155">
    <property type="term" value="P:cell adhesion"/>
    <property type="evidence" value="ECO:0000304"/>
    <property type="project" value="ProtInc"/>
</dbReference>
<dbReference type="GO" id="GO:0007166">
    <property type="term" value="P:cell surface receptor signaling pathway"/>
    <property type="evidence" value="ECO:0007669"/>
    <property type="project" value="InterPro"/>
</dbReference>
<dbReference type="GO" id="GO:0050829">
    <property type="term" value="P:defense response to Gram-negative bacterium"/>
    <property type="evidence" value="ECO:0000250"/>
    <property type="project" value="UniProtKB"/>
</dbReference>
<dbReference type="GO" id="GO:0043652">
    <property type="term" value="P:engulfment of apoptotic cell"/>
    <property type="evidence" value="ECO:0000315"/>
    <property type="project" value="UniProtKB"/>
</dbReference>
<dbReference type="GO" id="GO:0007186">
    <property type="term" value="P:G protein-coupled receptor signaling pathway"/>
    <property type="evidence" value="ECO:0000304"/>
    <property type="project" value="GDB"/>
</dbReference>
<dbReference type="GO" id="GO:0045087">
    <property type="term" value="P:innate immune response"/>
    <property type="evidence" value="ECO:0007669"/>
    <property type="project" value="UniProtKB-KW"/>
</dbReference>
<dbReference type="GO" id="GO:0007517">
    <property type="term" value="P:muscle organ development"/>
    <property type="evidence" value="ECO:0007669"/>
    <property type="project" value="UniProtKB-KW"/>
</dbReference>
<dbReference type="GO" id="GO:0016525">
    <property type="term" value="P:negative regulation of angiogenesis"/>
    <property type="evidence" value="ECO:0000314"/>
    <property type="project" value="UniProtKB"/>
</dbReference>
<dbReference type="GO" id="GO:0008285">
    <property type="term" value="P:negative regulation of cell population proliferation"/>
    <property type="evidence" value="ECO:0000304"/>
    <property type="project" value="ProtInc"/>
</dbReference>
<dbReference type="GO" id="GO:0010596">
    <property type="term" value="P:negative regulation of endothelial cell migration"/>
    <property type="evidence" value="ECO:0000314"/>
    <property type="project" value="UniProtKB"/>
</dbReference>
<dbReference type="GO" id="GO:0042177">
    <property type="term" value="P:negative regulation of protein catabolic process"/>
    <property type="evidence" value="ECO:0000250"/>
    <property type="project" value="UniProtKB"/>
</dbReference>
<dbReference type="GO" id="GO:0031397">
    <property type="term" value="P:negative regulation of protein ubiquitination"/>
    <property type="evidence" value="ECO:0000250"/>
    <property type="project" value="UniProtKB"/>
</dbReference>
<dbReference type="GO" id="GO:0007422">
    <property type="term" value="P:peripheral nervous system development"/>
    <property type="evidence" value="ECO:0000304"/>
    <property type="project" value="ProtInc"/>
</dbReference>
<dbReference type="GO" id="GO:0006910">
    <property type="term" value="P:phagocytosis, recognition"/>
    <property type="evidence" value="ECO:0000250"/>
    <property type="project" value="UniProtKB"/>
</dbReference>
<dbReference type="GO" id="GO:1901741">
    <property type="term" value="P:positive regulation of myoblast fusion"/>
    <property type="evidence" value="ECO:0000250"/>
    <property type="project" value="UniProtKB"/>
</dbReference>
<dbReference type="GO" id="GO:1903428">
    <property type="term" value="P:positive regulation of reactive oxygen species biosynthetic process"/>
    <property type="evidence" value="ECO:0000315"/>
    <property type="project" value="UniProtKB"/>
</dbReference>
<dbReference type="GO" id="GO:0051965">
    <property type="term" value="P:positive regulation of synapse assembly"/>
    <property type="evidence" value="ECO:0007669"/>
    <property type="project" value="Ensembl"/>
</dbReference>
<dbReference type="GO" id="GO:0048167">
    <property type="term" value="P:regulation of synaptic plasticity"/>
    <property type="evidence" value="ECO:0000250"/>
    <property type="project" value="UniProtKB"/>
</dbReference>
<dbReference type="GO" id="GO:0007165">
    <property type="term" value="P:signal transduction"/>
    <property type="evidence" value="ECO:0000304"/>
    <property type="project" value="ProtInc"/>
</dbReference>
<dbReference type="CDD" id="cd15990">
    <property type="entry name" value="7tmB2_BAI1"/>
    <property type="match status" value="1"/>
</dbReference>
<dbReference type="FunFam" id="1.20.1070.10:FF:000048">
    <property type="entry name" value="Adhesion G protein-coupled receptor B1"/>
    <property type="match status" value="1"/>
</dbReference>
<dbReference type="FunFam" id="2.60.220.50:FF:000016">
    <property type="entry name" value="Adhesion G protein-coupled receptor B1"/>
    <property type="match status" value="1"/>
</dbReference>
<dbReference type="FunFam" id="1.25.40.610:FF:000004">
    <property type="entry name" value="adhesion G protein-coupled receptor B1"/>
    <property type="match status" value="1"/>
</dbReference>
<dbReference type="FunFam" id="2.20.100.10:FF:000061">
    <property type="entry name" value="adhesion G protein-coupled receptor B1"/>
    <property type="match status" value="1"/>
</dbReference>
<dbReference type="FunFam" id="2.20.100.10:FF:000003">
    <property type="entry name" value="Adhesion G protein-coupled receptor B2"/>
    <property type="match status" value="2"/>
</dbReference>
<dbReference type="FunFam" id="2.20.100.10:FF:000004">
    <property type="entry name" value="Adhesion G protein-coupled receptor B2"/>
    <property type="match status" value="2"/>
</dbReference>
<dbReference type="FunFam" id="4.10.1240.10:FF:000002">
    <property type="entry name" value="Adhesion G protein-coupled receptor B2"/>
    <property type="match status" value="1"/>
</dbReference>
<dbReference type="Gene3D" id="1.25.40.610">
    <property type="match status" value="1"/>
</dbReference>
<dbReference type="Gene3D" id="2.60.220.50">
    <property type="match status" value="1"/>
</dbReference>
<dbReference type="Gene3D" id="4.10.1240.10">
    <property type="entry name" value="GPCR, family 2, extracellular hormone receptor domain"/>
    <property type="match status" value="1"/>
</dbReference>
<dbReference type="Gene3D" id="1.20.1070.10">
    <property type="entry name" value="Rhodopsin 7-helix transmembrane proteins"/>
    <property type="match status" value="1"/>
</dbReference>
<dbReference type="Gene3D" id="2.20.100.10">
    <property type="entry name" value="Thrombospondin type-1 (TSP1) repeat"/>
    <property type="match status" value="5"/>
</dbReference>
<dbReference type="InterPro" id="IPR043838">
    <property type="entry name" value="AGRB_N"/>
</dbReference>
<dbReference type="InterPro" id="IPR057244">
    <property type="entry name" value="GAIN_B"/>
</dbReference>
<dbReference type="InterPro" id="IPR032471">
    <property type="entry name" value="GAIN_dom_N"/>
</dbReference>
<dbReference type="InterPro" id="IPR046338">
    <property type="entry name" value="GAIN_dom_sf"/>
</dbReference>
<dbReference type="InterPro" id="IPR017981">
    <property type="entry name" value="GPCR_2-like_7TM"/>
</dbReference>
<dbReference type="InterPro" id="IPR008077">
    <property type="entry name" value="GPCR_2_brain_angio_inhib"/>
</dbReference>
<dbReference type="InterPro" id="IPR036445">
    <property type="entry name" value="GPCR_2_extracell_dom_sf"/>
</dbReference>
<dbReference type="InterPro" id="IPR001879">
    <property type="entry name" value="GPCR_2_extracellular_dom"/>
</dbReference>
<dbReference type="InterPro" id="IPR000832">
    <property type="entry name" value="GPCR_2_secretin-like"/>
</dbReference>
<dbReference type="InterPro" id="IPR000203">
    <property type="entry name" value="GPS"/>
</dbReference>
<dbReference type="InterPro" id="IPR000884">
    <property type="entry name" value="TSP1_rpt"/>
</dbReference>
<dbReference type="InterPro" id="IPR036383">
    <property type="entry name" value="TSP1_rpt_sf"/>
</dbReference>
<dbReference type="PANTHER" id="PTHR12011:SF39">
    <property type="entry name" value="ADHESION G PROTEIN-COUPLED RECEPTOR B1"/>
    <property type="match status" value="1"/>
</dbReference>
<dbReference type="PANTHER" id="PTHR12011">
    <property type="entry name" value="ADHESION G-PROTEIN COUPLED RECEPTOR"/>
    <property type="match status" value="1"/>
</dbReference>
<dbReference type="Pfam" id="PF00002">
    <property type="entry name" value="7tm_2"/>
    <property type="match status" value="1"/>
</dbReference>
<dbReference type="Pfam" id="PF19188">
    <property type="entry name" value="AGRB_N"/>
    <property type="match status" value="1"/>
</dbReference>
<dbReference type="Pfam" id="PF16489">
    <property type="entry name" value="GAIN"/>
    <property type="match status" value="1"/>
</dbReference>
<dbReference type="Pfam" id="PF01825">
    <property type="entry name" value="GPS"/>
    <property type="match status" value="1"/>
</dbReference>
<dbReference type="Pfam" id="PF02793">
    <property type="entry name" value="HRM"/>
    <property type="match status" value="1"/>
</dbReference>
<dbReference type="Pfam" id="PF00090">
    <property type="entry name" value="TSP_1"/>
    <property type="match status" value="5"/>
</dbReference>
<dbReference type="PRINTS" id="PR01694">
    <property type="entry name" value="BAIPRECURSOR"/>
</dbReference>
<dbReference type="PRINTS" id="PR00249">
    <property type="entry name" value="GPCRSECRETIN"/>
</dbReference>
<dbReference type="PRINTS" id="PR01705">
    <property type="entry name" value="TSP1REPEAT"/>
</dbReference>
<dbReference type="SMART" id="SM00303">
    <property type="entry name" value="GPS"/>
    <property type="match status" value="1"/>
</dbReference>
<dbReference type="SMART" id="SM00008">
    <property type="entry name" value="HormR"/>
    <property type="match status" value="1"/>
</dbReference>
<dbReference type="SMART" id="SM00209">
    <property type="entry name" value="TSP1"/>
    <property type="match status" value="5"/>
</dbReference>
<dbReference type="SUPFAM" id="SSF82895">
    <property type="entry name" value="TSP-1 type 1 repeat"/>
    <property type="match status" value="5"/>
</dbReference>
<dbReference type="PROSITE" id="PS50227">
    <property type="entry name" value="G_PROTEIN_RECEP_F2_3"/>
    <property type="match status" value="1"/>
</dbReference>
<dbReference type="PROSITE" id="PS50261">
    <property type="entry name" value="G_PROTEIN_RECEP_F2_4"/>
    <property type="match status" value="1"/>
</dbReference>
<dbReference type="PROSITE" id="PS50221">
    <property type="entry name" value="GAIN_B"/>
    <property type="match status" value="1"/>
</dbReference>
<dbReference type="PROSITE" id="PS50092">
    <property type="entry name" value="TSP1"/>
    <property type="match status" value="5"/>
</dbReference>
<gene>
    <name evidence="29" type="primary">ADGRB1</name>
    <name evidence="26" type="synonym">BAI1</name>
</gene>
<comment type="function">
    <text evidence="1 2 9 17 18 20">Phosphatidylserine receptor which enhances the engulfment of apoptotic cells (PubMed:24509909). Also mediates the binding and engulfment of Gram-negative bacteria (PubMed:26838550). Stimulates production of reactive oxygen species by macrophages in response to Gram-negative bacteria, resulting in enhanced microbicidal macrophage activity (PubMed:26838550). In the gastric mucosa, required for recognition and engulfment of apoptotic gastric epithelial cells (PubMed:24509909). Promotes myoblast fusion (By similarity). Activates the Rho pathway in a G-protein-dependent manner (PubMed:23782696). Inhibits MDM2-mediated ubiquitination and degradation of DLG4/PSD95, promoting DLG4 stability and regulating synaptic plasticity (By similarity). Required for the formation of dendritic spines by ensuring the correct localization of PARD3 and TIAM1 (By similarity). Potent inhibitor of angiogenesis in brain and may play a significant role as a mediator of the p53/TP53 signal in suppression of glioblastoma (PubMed:11875720).</text>
</comment>
<comment type="function">
    <molecule>Vasculostatin-120</molecule>
    <text evidence="12 13">Inhibits angiogenesis in a CD36-dependent manner.</text>
</comment>
<comment type="function">
    <molecule>Vasculostatin-40</molecule>
    <text evidence="14">Inhibits angiogenesis.</text>
</comment>
<comment type="subunit">
    <text evidence="2 7 8 13 16 17 21 22">Interacts with ELMO1 and DOCK (By similarity). When bound to ELMO1 and DOCK1, acts as a module to promote apoptotic cell engulfment (By similarity). Interacts with MDM2; the interaction results in inhibition of MDM2-mediated ubiquitination and degradation of DLG4/PSD95 (By similarity). Interacts with PARD3 and TIAM1; the interaction is required for correct dendritic. localization of PARD3 and TIAM1 and for dendritic spine formation (PubMed:23595754). Interacts with MAGI1 (PubMed:9647739). Interacts with MAGI3 (PubMed:10748157). Interacts with BAIAP2 (PubMed:10343108). Interacts with PHYHIP (By similarity). Interacts with DLG4 (via PDZ domain) (PubMed:23782696). Vasculostatin-120: Interacts with CD36 (PubMed:19176395). Vasculostatin-120: Interacts with ARRB2 (PubMed:23782696). Interacts with BAIAP3; this interaction is direct (PubMed:9790924).</text>
</comment>
<comment type="interaction">
    <interactant intactId="EBI-1995178">
        <id>O14514</id>
    </interactant>
    <interactant intactId="EBI-15668002">
        <id>Q92556-1</id>
        <label>ELMO1</label>
    </interactant>
    <organismsDiffer>false</organismsDiffer>
    <experiments>2</experiments>
</comment>
<comment type="subcellular location">
    <subcellularLocation>
        <location evidence="10 20">Cell membrane</location>
        <topology evidence="3">Multi-pass membrane protein</topology>
    </subcellularLocation>
    <subcellularLocation>
        <location evidence="2">Cell projection</location>
        <location evidence="2">Phagocytic cup</location>
    </subcellularLocation>
    <subcellularLocation>
        <location evidence="2">Cell junction</location>
        <location evidence="2">Focal adhesion</location>
    </subcellularLocation>
    <subcellularLocation>
        <location evidence="1">Cell projection</location>
        <location evidence="1">Dendritic spine</location>
    </subcellularLocation>
    <subcellularLocation>
        <location evidence="2">Postsynaptic density</location>
    </subcellularLocation>
</comment>
<comment type="subcellular location">
    <molecule>Vasculostatin-120</molecule>
    <subcellularLocation>
        <location evidence="12 14">Secreted</location>
    </subcellularLocation>
</comment>
<comment type="subcellular location">
    <molecule>Vasculostatin-40</molecule>
    <subcellularLocation>
        <location evidence="14">Secreted</location>
    </subcellularLocation>
</comment>
<comment type="tissue specificity">
    <text evidence="9 10 11 18">Expressed in brain (at protein level) (PubMed:12074842, PubMed:12507886). Expressed on mononuclear phagocytes and monocyte-derived macrophages in the gastric mucosa (at protein level) (PubMed:24509909). Expressed in normal pancreatic tissue but not in pancreatic tumor tissue (PubMed:11875720). Reduced or no expression is observed in some glioblastomas (PubMed:12507886).</text>
</comment>
<comment type="induction">
    <text>By p53/TP53.</text>
</comment>
<comment type="domain">
    <text evidence="2">The TSP type-1 repeats in the extracellular domain mediate binding to phosphatidylserine. They are also required for bacterial recognition and binding to bacterial outer membrane lipopolysaccharide.</text>
</comment>
<comment type="PTM">
    <text evidence="12 14 15">Proteolytically cleaved to produce vasculostatin-40 and vasculostatin-120 (PubMed:15782143, PubMed:22330140, PubMed:22333914). Vasculostatin-40 is the major form and is produced through proteolytic cleavage by MMP14 between residues 321 and 329 with cleavage likely to be between Ser-326 and Leu-327 (PubMed:22330140).</text>
</comment>
<comment type="PTM">
    <text evidence="17">Ubiquitinated.</text>
</comment>
<comment type="similarity">
    <text evidence="27">Belongs to the G-protein coupled receptor 2 family. LN-TM7 subfamily.</text>
</comment>
<feature type="signal peptide" evidence="3">
    <location>
        <begin position="1"/>
        <end position="30"/>
    </location>
</feature>
<feature type="chain" id="PRO_0000012863" description="Adhesion G protein-coupled receptor B1">
    <location>
        <begin position="31"/>
        <end position="1584"/>
    </location>
</feature>
<feature type="chain" id="PRO_0000441805" description="Vasculostatin-120" evidence="12">
    <location>
        <begin position="31"/>
        <end position="926"/>
    </location>
</feature>
<feature type="chain" id="PRO_0000441804" description="Vasculostatin-40" evidence="28">
    <location>
        <begin position="31"/>
        <end position="327" status="uncertain"/>
    </location>
</feature>
<feature type="topological domain" description="Extracellular" evidence="3">
    <location>
        <begin position="31"/>
        <end position="948"/>
    </location>
</feature>
<feature type="transmembrane region" description="Helical; Name=1" evidence="3">
    <location>
        <begin position="949"/>
        <end position="969"/>
    </location>
</feature>
<feature type="topological domain" description="Cytoplasmic" evidence="3">
    <location>
        <begin position="970"/>
        <end position="980"/>
    </location>
</feature>
<feature type="transmembrane region" description="Helical; Name=2" evidence="3">
    <location>
        <begin position="981"/>
        <end position="1001"/>
    </location>
</feature>
<feature type="topological domain" description="Extracellular" evidence="3">
    <location>
        <begin position="1002"/>
        <end position="1008"/>
    </location>
</feature>
<feature type="transmembrane region" description="Helical; Name=3" evidence="3">
    <location>
        <begin position="1009"/>
        <end position="1029"/>
    </location>
</feature>
<feature type="topological domain" description="Cytoplasmic" evidence="3">
    <location>
        <begin position="1030"/>
        <end position="1052"/>
    </location>
</feature>
<feature type="transmembrane region" description="Helical; Name=4" evidence="3">
    <location>
        <begin position="1053"/>
        <end position="1073"/>
    </location>
</feature>
<feature type="topological domain" description="Extracellular" evidence="3">
    <location>
        <begin position="1074"/>
        <end position="1093"/>
    </location>
</feature>
<feature type="transmembrane region" description="Helical; Name=5" evidence="3">
    <location>
        <begin position="1094"/>
        <end position="1114"/>
    </location>
</feature>
<feature type="topological domain" description="Cytoplasmic" evidence="3">
    <location>
        <begin position="1115"/>
        <end position="1136"/>
    </location>
</feature>
<feature type="transmembrane region" description="Helical; Name=6" evidence="3">
    <location>
        <begin position="1137"/>
        <end position="1157"/>
    </location>
</feature>
<feature type="topological domain" description="Extracellular" evidence="3">
    <location>
        <begin position="1158"/>
        <end position="1166"/>
    </location>
</feature>
<feature type="transmembrane region" description="Helical; Name=7" evidence="3">
    <location>
        <begin position="1167"/>
        <end position="1187"/>
    </location>
</feature>
<feature type="topological domain" description="Cytoplasmic" evidence="3">
    <location>
        <begin position="1188"/>
        <end position="1584"/>
    </location>
</feature>
<feature type="domain" description="TSP type-1 1" evidence="5">
    <location>
        <begin position="261"/>
        <end position="315"/>
    </location>
</feature>
<feature type="domain" description="TSP type-1 2" evidence="5">
    <location>
        <begin position="354"/>
        <end position="407"/>
    </location>
</feature>
<feature type="domain" description="TSP type-1 3" evidence="5">
    <location>
        <begin position="409"/>
        <end position="462"/>
    </location>
</feature>
<feature type="domain" description="TSP type-1 4" evidence="5">
    <location>
        <begin position="467"/>
        <end position="520"/>
    </location>
</feature>
<feature type="domain" description="TSP type-1 5" evidence="5">
    <location>
        <begin position="522"/>
        <end position="575"/>
    </location>
</feature>
<feature type="domain" description="GAIN-B" evidence="4">
    <location>
        <begin position="760"/>
        <end position="939"/>
    </location>
</feature>
<feature type="region of interest" description="Disordered" evidence="6">
    <location>
        <begin position="146"/>
        <end position="167"/>
    </location>
</feature>
<feature type="region of interest" description="Disordered" evidence="6">
    <location>
        <begin position="313"/>
        <end position="335"/>
    </location>
</feature>
<feature type="region of interest" description="GPS" evidence="4">
    <location>
        <begin position="884"/>
        <end position="939"/>
    </location>
</feature>
<feature type="region of interest" description="N-terminal stalk following vasculostatin-120 cleavage which is not required for signaling activity" evidence="19">
    <location>
        <begin position="927"/>
        <end position="943"/>
    </location>
</feature>
<feature type="region of interest" description="Involved in interaction with MAGI1" evidence="21">
    <location>
        <begin position="1365"/>
        <end position="1584"/>
    </location>
</feature>
<feature type="region of interest" description="Disordered" evidence="6">
    <location>
        <begin position="1385"/>
        <end position="1475"/>
    </location>
</feature>
<feature type="region of interest" description="Disordered" evidence="6">
    <location>
        <begin position="1501"/>
        <end position="1548"/>
    </location>
</feature>
<feature type="region of interest" description="Indispensable for interaction with MAGI1" evidence="21">
    <location>
        <begin position="1581"/>
        <end position="1584"/>
    </location>
</feature>
<feature type="compositionally biased region" description="Low complexity" evidence="6">
    <location>
        <begin position="319"/>
        <end position="329"/>
    </location>
</feature>
<feature type="compositionally biased region" description="Pro residues" evidence="6">
    <location>
        <begin position="1391"/>
        <end position="1439"/>
    </location>
</feature>
<feature type="compositionally biased region" description="Polar residues" evidence="6">
    <location>
        <begin position="1453"/>
        <end position="1469"/>
    </location>
</feature>
<feature type="compositionally biased region" description="Basic and acidic residues" evidence="6">
    <location>
        <begin position="1501"/>
        <end position="1522"/>
    </location>
</feature>
<feature type="site" description="Cleavage" evidence="12">
    <location>
        <begin position="926"/>
        <end position="927"/>
    </location>
</feature>
<feature type="modified residue" description="Phosphothreonine" evidence="30">
    <location>
        <position position="609"/>
    </location>
</feature>
<feature type="modified residue" description="Phosphoserine" evidence="2">
    <location>
        <position position="1469"/>
    </location>
</feature>
<feature type="glycosylation site" description="N-linked (GlcNAc...) asparagine" evidence="3">
    <location>
        <position position="64"/>
    </location>
</feature>
<feature type="glycosylation site" description="N-linked (GlcNAc...) asparagine" evidence="3">
    <location>
        <position position="401"/>
    </location>
</feature>
<feature type="glycosylation site" description="N-linked (GlcNAc...) asparagine" evidence="3">
    <location>
        <position position="607"/>
    </location>
</feature>
<feature type="glycosylation site" description="N-linked (GlcNAc...) asparagine" evidence="3">
    <location>
        <position position="692"/>
    </location>
</feature>
<feature type="glycosylation site" description="N-linked (GlcNAc...) asparagine" evidence="3">
    <location>
        <position position="844"/>
    </location>
</feature>
<feature type="glycosylation site" description="N-linked (GlcNAc...) asparagine" evidence="3">
    <location>
        <position position="877"/>
    </location>
</feature>
<feature type="glycosylation site" description="N-linked (GlcNAc...) asparagine" evidence="3">
    <location>
        <position position="881"/>
    </location>
</feature>
<feature type="disulfide bond" evidence="5">
    <location>
        <begin position="273"/>
        <end position="309"/>
    </location>
</feature>
<feature type="disulfide bond" evidence="5">
    <location>
        <begin position="277"/>
        <end position="314"/>
    </location>
</feature>
<feature type="disulfide bond" evidence="5">
    <location>
        <begin position="288"/>
        <end position="299"/>
    </location>
</feature>
<feature type="disulfide bond" evidence="5">
    <location>
        <begin position="366"/>
        <end position="400"/>
    </location>
</feature>
<feature type="disulfide bond" evidence="5">
    <location>
        <begin position="370"/>
        <end position="406"/>
    </location>
</feature>
<feature type="disulfide bond" evidence="5">
    <location>
        <begin position="381"/>
        <end position="390"/>
    </location>
</feature>
<feature type="disulfide bond" evidence="5">
    <location>
        <begin position="421"/>
        <end position="456"/>
    </location>
</feature>
<feature type="disulfide bond" evidence="5">
    <location>
        <begin position="425"/>
        <end position="461"/>
    </location>
</feature>
<feature type="disulfide bond" evidence="5">
    <location>
        <begin position="436"/>
        <end position="446"/>
    </location>
</feature>
<feature type="disulfide bond" evidence="5">
    <location>
        <begin position="479"/>
        <end position="514"/>
    </location>
</feature>
<feature type="disulfide bond" evidence="5">
    <location>
        <begin position="483"/>
        <end position="519"/>
    </location>
</feature>
<feature type="disulfide bond" evidence="5">
    <location>
        <begin position="494"/>
        <end position="504"/>
    </location>
</feature>
<feature type="disulfide bond" evidence="5">
    <location>
        <begin position="534"/>
        <end position="569"/>
    </location>
</feature>
<feature type="disulfide bond" evidence="5">
    <location>
        <begin position="538"/>
        <end position="574"/>
    </location>
</feature>
<feature type="disulfide bond" evidence="5">
    <location>
        <begin position="549"/>
        <end position="559"/>
    </location>
</feature>
<feature type="disulfide bond" evidence="5">
    <location>
        <begin position="581"/>
        <end position="616"/>
    </location>
</feature>
<feature type="disulfide bond" evidence="5">
    <location>
        <begin position="604"/>
        <end position="634"/>
    </location>
</feature>
<feature type="disulfide bond" evidence="4">
    <location>
        <begin position="884"/>
        <end position="921"/>
    </location>
</feature>
<feature type="disulfide bond" evidence="4">
    <location>
        <begin position="909"/>
        <end position="923"/>
    </location>
</feature>
<feature type="mutagenesis site" description="Abolishes processing of vasculostatin-40." evidence="14">
    <original>RSQ</original>
    <variation>AAA</variation>
    <location>
        <begin position="323"/>
        <end position="325"/>
    </location>
</feature>
<feature type="mutagenesis site" description="Does not affect processing of vasculostatin-40." evidence="14">
    <original>SLR</original>
    <variation>AAA</variation>
    <location>
        <begin position="326"/>
        <end position="328"/>
    </location>
</feature>
<feature type="mutagenesis site" description="Abolishes cleavage and production of vasculostatin-120." evidence="12">
    <original>S</original>
    <variation>A</variation>
    <location>
        <position position="927"/>
    </location>
</feature>
<feature type="mutagenesis site" description="Increased levels of vasculostatin-120 and decreased levels of vasculostatin-40." evidence="14">
    <original>S</original>
    <variation>D</variation>
    <location>
        <position position="927"/>
    </location>
</feature>
<feature type="sequence conflict" description="In Ref. 1; BAA23647." evidence="27" ref="1">
    <original>V</original>
    <variation>M</variation>
    <location>
        <position position="1010"/>
    </location>
</feature>
<proteinExistence type="evidence at protein level"/>
<keyword id="KW-0965">Cell junction</keyword>
<keyword id="KW-1003">Cell membrane</keyword>
<keyword id="KW-0966">Cell projection</keyword>
<keyword id="KW-1015">Disulfide bond</keyword>
<keyword id="KW-0297">G-protein coupled receptor</keyword>
<keyword id="KW-0325">Glycoprotein</keyword>
<keyword id="KW-0391">Immunity</keyword>
<keyword id="KW-0399">Innate immunity</keyword>
<keyword id="KW-0472">Membrane</keyword>
<keyword id="KW-0517">Myogenesis</keyword>
<keyword id="KW-0524">Neurogenesis</keyword>
<keyword id="KW-0581">Phagocytosis</keyword>
<keyword id="KW-0597">Phosphoprotein</keyword>
<keyword id="KW-1267">Proteomics identification</keyword>
<keyword id="KW-0675">Receptor</keyword>
<keyword id="KW-1185">Reference proteome</keyword>
<keyword id="KW-0677">Repeat</keyword>
<keyword id="KW-0964">Secreted</keyword>
<keyword id="KW-0732">Signal</keyword>
<keyword id="KW-0770">Synapse</keyword>
<keyword id="KW-0807">Transducer</keyword>
<keyword id="KW-0812">Transmembrane</keyword>
<keyword id="KW-1133">Transmembrane helix</keyword>
<keyword id="KW-0832">Ubl conjugation</keyword>
<protein>
    <recommendedName>
        <fullName evidence="29">Adhesion G protein-coupled receptor B1</fullName>
    </recommendedName>
    <alternativeName>
        <fullName evidence="26">Brain-specific angiogenesis inhibitor 1</fullName>
    </alternativeName>
    <component>
        <recommendedName>
            <fullName evidence="25">Vasculostatin-40</fullName>
            <shortName evidence="25">Vstat40</shortName>
        </recommendedName>
    </component>
    <component>
        <recommendedName>
            <fullName evidence="23">Vasculostatin-120</fullName>
            <shortName evidence="24">Vstat120</shortName>
        </recommendedName>
    </component>
</protein>
<accession>O14514</accession>
<organism>
    <name type="scientific">Homo sapiens</name>
    <name type="common">Human</name>
    <dbReference type="NCBI Taxonomy" id="9606"/>
    <lineage>
        <taxon>Eukaryota</taxon>
        <taxon>Metazoa</taxon>
        <taxon>Chordata</taxon>
        <taxon>Craniata</taxon>
        <taxon>Vertebrata</taxon>
        <taxon>Euteleostomi</taxon>
        <taxon>Mammalia</taxon>
        <taxon>Eutheria</taxon>
        <taxon>Euarchontoglires</taxon>
        <taxon>Primates</taxon>
        <taxon>Haplorrhini</taxon>
        <taxon>Catarrhini</taxon>
        <taxon>Hominidae</taxon>
        <taxon>Homo</taxon>
    </lineage>
</organism>
<evidence type="ECO:0000250" key="1">
    <source>
        <dbReference type="UniProtKB" id="C0HL12"/>
    </source>
</evidence>
<evidence type="ECO:0000250" key="2">
    <source>
        <dbReference type="UniProtKB" id="Q3UHD1"/>
    </source>
</evidence>
<evidence type="ECO:0000255" key="3"/>
<evidence type="ECO:0000255" key="4">
    <source>
        <dbReference type="PROSITE-ProRule" id="PRU00098"/>
    </source>
</evidence>
<evidence type="ECO:0000255" key="5">
    <source>
        <dbReference type="PROSITE-ProRule" id="PRU00210"/>
    </source>
</evidence>
<evidence type="ECO:0000256" key="6">
    <source>
        <dbReference type="SAM" id="MobiDB-lite"/>
    </source>
</evidence>
<evidence type="ECO:0000269" key="7">
    <source>
    </source>
</evidence>
<evidence type="ECO:0000269" key="8">
    <source>
    </source>
</evidence>
<evidence type="ECO:0000269" key="9">
    <source>
    </source>
</evidence>
<evidence type="ECO:0000269" key="10">
    <source>
    </source>
</evidence>
<evidence type="ECO:0000269" key="11">
    <source>
    </source>
</evidence>
<evidence type="ECO:0000269" key="12">
    <source>
    </source>
</evidence>
<evidence type="ECO:0000269" key="13">
    <source>
    </source>
</evidence>
<evidence type="ECO:0000269" key="14">
    <source>
    </source>
</evidence>
<evidence type="ECO:0000269" key="15">
    <source>
    </source>
</evidence>
<evidence type="ECO:0000269" key="16">
    <source>
    </source>
</evidence>
<evidence type="ECO:0000269" key="17">
    <source>
    </source>
</evidence>
<evidence type="ECO:0000269" key="18">
    <source>
    </source>
</evidence>
<evidence type="ECO:0000269" key="19">
    <source>
    </source>
</evidence>
<evidence type="ECO:0000269" key="20">
    <source>
    </source>
</evidence>
<evidence type="ECO:0000269" key="21">
    <source>
    </source>
</evidence>
<evidence type="ECO:0000269" key="22">
    <source>
    </source>
</evidence>
<evidence type="ECO:0000303" key="23">
    <source>
    </source>
</evidence>
<evidence type="ECO:0000303" key="24">
    <source>
    </source>
</evidence>
<evidence type="ECO:0000303" key="25">
    <source>
    </source>
</evidence>
<evidence type="ECO:0000303" key="26">
    <source>
    </source>
</evidence>
<evidence type="ECO:0000305" key="27"/>
<evidence type="ECO:0000305" key="28">
    <source>
    </source>
</evidence>
<evidence type="ECO:0000312" key="29">
    <source>
        <dbReference type="HGNC" id="HGNC:943"/>
    </source>
</evidence>
<evidence type="ECO:0007744" key="30">
    <source>
    </source>
</evidence>
<name>AGRB1_HUMAN</name>
<sequence length="1584" mass="173501">MRGQAAAPGPVWILAPLLLLLLLLGRRARAAAGADAGPGPEPCATLVQGKFFGYFSAAAVFPANASRCSWTLRNPDPRRYTLYMKVAKAPVPCSGPGRVRTYQFDSFLESTRTYLGVESFDEVLRLCDPSAPLAFLQASKQFLQMRRQQPPQHDGLRPRAGPPGPTDDFSVEYLVVGNRNPSRAACQMLCRWLDACLAGSRSSHPCGIMQTPCACLGGEAGGPAAGPLAPRGDVCLRDAVAGGPENCLTSLTQDRGGHGATGGWKLWSLWGECTRDCGGGLQTRTRTCLPAPGVEGGGCEGVLEEGRQCNREACGPAGRTSSRSQSLRSTDARRREELGDELQQFGFPAPQTGDPAAEEWSPWSVCSSTCGEGWQTRTRFCVSSSYSTQCSGPLREQRLCNNSAVCPVHGAWDEWSPWSLCSSTCGRGFRDRTRTCRPPQFGGNPCEGPEKQTKFCNIALCPGRAVDGNWNEWSSWSACSASCSQGRQQRTRECNGPSYGGAECQGHWVETRDCFLQQCPVDGKWQAWASWGSCSVTCGAGSQRRERVCSGPFFGGAACQGPQDEYRQCGTQRCPEPHEICDEDNFGAVIWKETPAGEVAAVRCPRNATGLILRRCELDEEGIAYWEPPTYIRCVSIDYRNIQMMTREHLAKAQRGLPGEGVSEVIQTLVEISQDGTSYSGDLLSTIDVLRNMTEIFRRAYYSPTPGDVQNFVQILSNLLAEENRDKWEEAQLAGPNAKELFRLVEDFVDVIGFRMKDLRDAYQVTDNLVLSIHKLPASGATDISFPMKGWRATGDWAKVPEDRVTVSKSVFSTGLTEADEASVFVVGTVLYRNLGSFLALQRNTTVLNSKVISVTVKPPPRSLRTPLEIEFAHMYNGTTNQTCILWDETDVPSSSAPPQLGPWSWRGCRTVPLDALRTRCLCDRLSTFAILAQLSADANMEKATLPSVTLIVGCGVSSLTLLMLVIIYVSVWRYIRSERSVILINFCLSIISSNALILIGQTQTRNKVVCTLVAAFLHFFFLSSFCWVLTEAWQSYMAVTGHLRNRLIRKRFLCLGWGLPALVVAISVGFTKAKGYSTMNYCWLSLEGGLLYAFVGPAAAVVLVNMVIGILVFNKLVSKDGITDKKLKERAGASLWSSCVVLPLLALTWMSAVLAVTDRRSALFQILFAVFDSLEGFVIVMVHCILRREVQDAVKCRVVDRQEEGNGDSGGSFQNGHAQLMTDFEKDVDLACRSVLNKDIAACRTATITGTLKRPSLPEEEKLKLAHAKGPPTNFNSLPANVSKLHLHGSPRYPGGPLPDFPNHSLTLKRDKAPKSSFVGDGDIFKKLDSELSRAQEKALDTSYVILPTATATLRPKPKEEPKYSIHIDQMPQTRLIHLSTAPEASLPARSPPSRQPPSGGPPEAPPAQPPPPPPPPPPPPQQPLPPPPNLEPAPPSLGDPGEPAAHPGPSTGPSTKNENVATLSVSSLERRKSRYAELDFEKIMHTRKRHQDMFQDLNRKLQHAAEKDKEVLGPDSKPEKQQTPNKRPWESLRKAHGTPTWVKKELEPLQPSPLELRSVEWERSGATIPLVGQDIIDLQTEV</sequence>
<reference key="1">
    <citation type="journal article" date="1997" name="Oncogene">
        <title>A novel brain-specific p53-target gene, BAI1, containing thrombospondin type 1 repeats inhibits experimental angiogenesis.</title>
        <authorList>
            <person name="Nishimori H."/>
            <person name="Shiratsuchi T."/>
            <person name="Urano T."/>
            <person name="Kimura Y."/>
            <person name="Kiyono K."/>
            <person name="Tatsumi K."/>
            <person name="Yoshida S."/>
            <person name="Ono M."/>
            <person name="Kuwano M."/>
            <person name="Nakamura Y."/>
            <person name="Tokino T."/>
        </authorList>
    </citation>
    <scope>NUCLEOTIDE SEQUENCE [MRNA]</scope>
    <source>
        <tissue>Fetal brain</tissue>
    </source>
</reference>
<reference key="2">
    <citation type="journal article" date="2006" name="Nature">
        <title>DNA sequence and analysis of human chromosome 8.</title>
        <authorList>
            <person name="Nusbaum C."/>
            <person name="Mikkelsen T.S."/>
            <person name="Zody M.C."/>
            <person name="Asakawa S."/>
            <person name="Taudien S."/>
            <person name="Garber M."/>
            <person name="Kodira C.D."/>
            <person name="Schueler M.G."/>
            <person name="Shimizu A."/>
            <person name="Whittaker C.A."/>
            <person name="Chang J.L."/>
            <person name="Cuomo C.A."/>
            <person name="Dewar K."/>
            <person name="FitzGerald M.G."/>
            <person name="Yang X."/>
            <person name="Allen N.R."/>
            <person name="Anderson S."/>
            <person name="Asakawa T."/>
            <person name="Blechschmidt K."/>
            <person name="Bloom T."/>
            <person name="Borowsky M.L."/>
            <person name="Butler J."/>
            <person name="Cook A."/>
            <person name="Corum B."/>
            <person name="DeArellano K."/>
            <person name="DeCaprio D."/>
            <person name="Dooley K.T."/>
            <person name="Dorris L. III"/>
            <person name="Engels R."/>
            <person name="Gloeckner G."/>
            <person name="Hafez N."/>
            <person name="Hagopian D.S."/>
            <person name="Hall J.L."/>
            <person name="Ishikawa S.K."/>
            <person name="Jaffe D.B."/>
            <person name="Kamat A."/>
            <person name="Kudoh J."/>
            <person name="Lehmann R."/>
            <person name="Lokitsang T."/>
            <person name="Macdonald P."/>
            <person name="Major J.E."/>
            <person name="Matthews C.D."/>
            <person name="Mauceli E."/>
            <person name="Menzel U."/>
            <person name="Mihalev A.H."/>
            <person name="Minoshima S."/>
            <person name="Murayama Y."/>
            <person name="Naylor J.W."/>
            <person name="Nicol R."/>
            <person name="Nguyen C."/>
            <person name="O'Leary S.B."/>
            <person name="O'Neill K."/>
            <person name="Parker S.C.J."/>
            <person name="Polley A."/>
            <person name="Raymond C.K."/>
            <person name="Reichwald K."/>
            <person name="Rodriguez J."/>
            <person name="Sasaki T."/>
            <person name="Schilhabel M."/>
            <person name="Siddiqui R."/>
            <person name="Smith C.L."/>
            <person name="Sneddon T.P."/>
            <person name="Talamas J.A."/>
            <person name="Tenzin P."/>
            <person name="Topham K."/>
            <person name="Venkataraman V."/>
            <person name="Wen G."/>
            <person name="Yamazaki S."/>
            <person name="Young S.K."/>
            <person name="Zeng Q."/>
            <person name="Zimmer A.R."/>
            <person name="Rosenthal A."/>
            <person name="Birren B.W."/>
            <person name="Platzer M."/>
            <person name="Shimizu N."/>
            <person name="Lander E.S."/>
        </authorList>
    </citation>
    <scope>NUCLEOTIDE SEQUENCE [LARGE SCALE GENOMIC DNA]</scope>
</reference>
<reference key="3">
    <citation type="journal article" date="1998" name="Biochem. Biophys. Res. Commun.">
        <title>Cloning and characterization of BAI-associated protein 1: a PDZ domain-containing protein that interacts with BAI1.</title>
        <authorList>
            <person name="Shiratsuchi T."/>
            <person name="Futamura M."/>
            <person name="Oda K."/>
            <person name="Nishimori H."/>
            <person name="Nakamura Y."/>
            <person name="Tokino T."/>
        </authorList>
    </citation>
    <scope>INTERACTION WITH MAGI1</scope>
</reference>
<reference key="4">
    <citation type="journal article" date="1998" name="Biochem. Biophys. Res. Commun.">
        <title>Cloning and characterization of BAP3 (BAI-associated protein 3), a C2 domain-containing protein that interacts with BAI1.</title>
        <authorList>
            <person name="Shiratsuchi T."/>
            <person name="Oda K."/>
            <person name="Nishimori H."/>
            <person name="Suzuki M."/>
            <person name="Takahashi E."/>
            <person name="Tokino T."/>
            <person name="Nakamura Y."/>
        </authorList>
    </citation>
    <scope>INTERACTION WITH BAIAP3</scope>
</reference>
<reference key="5">
    <citation type="journal article" date="1999" name="Cytogenet. Cell Genet.">
        <title>Identification of BAIAP2 (BAI-associated protein 2), a novel human homologue of hamster IRSp53, whose SH3 domain interacts with the cytoplasmic domain of BAI1.</title>
        <authorList>
            <person name="Oda K."/>
            <person name="Shiratsuchi T."/>
            <person name="Nishimori H."/>
            <person name="Inazawa J."/>
            <person name="Yoshikawa H."/>
            <person name="Taketani Y."/>
            <person name="Nakamura Y."/>
            <person name="Tokino T."/>
        </authorList>
    </citation>
    <scope>INTERACTION WITH BAIAP2</scope>
</reference>
<reference key="6">
    <citation type="journal article" date="2000" name="J. Biol. Chem.">
        <title>Interaction of the tumor suppressor PTEN/MMAC with a PDZ domain of MAGI3, a novel membrane-associated guanylate kinase.</title>
        <authorList>
            <person name="Wu Y."/>
            <person name="Dowbenko D."/>
            <person name="Spencer S."/>
            <person name="Laura R."/>
            <person name="Lee J."/>
            <person name="Gu Q."/>
            <person name="Lasky L.A."/>
        </authorList>
    </citation>
    <scope>INTERACTION WITH MAGI3</scope>
</reference>
<reference key="7">
    <citation type="journal article" date="2002" name="Br. J. Cancer">
        <title>Overexpression of the p53-inducible brain-specific angiogenesis inhibitor 1 suppresses efficiently tumour angiogenesis.</title>
        <authorList>
            <person name="Duda D.G."/>
            <person name="Sunamura M."/>
            <person name="Lozonschi L."/>
            <person name="Yokoyama T."/>
            <person name="Yatsuoka T."/>
            <person name="Motoi F."/>
            <person name="Horii A."/>
            <person name="Tani K."/>
            <person name="Asano S."/>
            <person name="Nakamura Y."/>
            <person name="Matsuno S."/>
        </authorList>
    </citation>
    <scope>FUNCTION</scope>
    <scope>TISSUE SPECIFICITY</scope>
</reference>
<reference key="8">
    <citation type="journal article" date="2002" name="Neurosci. Res.">
        <title>Brain-specific angiogenesis inhibitor 1 (BAI1) is expressed in human cerebral neuronal cells.</title>
        <authorList>
            <person name="Mori K."/>
            <person name="Kanemura Y."/>
            <person name="Fujikawa H."/>
            <person name="Nakano A."/>
            <person name="Ikemoto H."/>
            <person name="Ozaki I."/>
            <person name="Matsumoto T."/>
            <person name="Tamura K."/>
            <person name="Yokota M."/>
            <person name="Arita N."/>
        </authorList>
    </citation>
    <scope>TISSUE SPECIFICITY</scope>
    <scope>SUBCELLULAR LOCATION</scope>
</reference>
<reference key="9">
    <citation type="journal article" date="2003" name="Am. J. Pathol.">
        <title>Brain angiogenesis inhibitor 1 is differentially expressed in normal brain and glioblastoma independently of p53 expression.</title>
        <authorList>
            <person name="Kaur B."/>
            <person name="Brat D.J."/>
            <person name="Calkins C.C."/>
            <person name="Van Meir E.G."/>
        </authorList>
    </citation>
    <scope>TISSUE SPECIFICITY</scope>
</reference>
<reference key="10">
    <citation type="journal article" date="2005" name="Oncogene">
        <title>Vasculostatin, a proteolytic fragment of brain angiogenesis inhibitor 1, is an antiangiogenic and antitumorigenic factor.</title>
        <authorList>
            <person name="Kaur B."/>
            <person name="Brat D.J."/>
            <person name="Devi N.S."/>
            <person name="Van Meir E.G."/>
        </authorList>
    </citation>
    <scope>FUNCTION (VASCULOSTATIN-120)</scope>
    <scope>SUBCELLULAR LOCATION (VASCULOSTATIN-120)</scope>
    <scope>PROTEOLYTIC PROCESSING</scope>
    <scope>MUTAGENESIS OF SER-927</scope>
</reference>
<reference key="11">
    <citation type="journal article" date="2009" name="Cancer Res.">
        <title>Vasculostatin inhibits intracranial glioma growth and negatively regulates in vivo angiogenesis through a CD36-dependent mechanism.</title>
        <authorList>
            <person name="Kaur B."/>
            <person name="Cork S.M."/>
            <person name="Sandberg E.M."/>
            <person name="Devi N.S."/>
            <person name="Zhang Z."/>
            <person name="Klenotic P.A."/>
            <person name="Febbraio M."/>
            <person name="Shim H."/>
            <person name="Mao H."/>
            <person name="Tucker-Burden C."/>
            <person name="Silverstein R.L."/>
            <person name="Brat D.J."/>
            <person name="Olson J.J."/>
            <person name="Van Meir E.G."/>
        </authorList>
    </citation>
    <scope>FUNCTION (VASCULOSTATIN-120)</scope>
    <scope>INTERACTION WITH CD36 (VASCULOSTATIN-120)</scope>
</reference>
<reference key="12">
    <citation type="journal article" date="2012" name="EMBO J.">
        <title>A novel evolutionarily conserved domain of cell-adhesion GPCRs mediates autoproteolysis.</title>
        <authorList>
            <person name="Arac D."/>
            <person name="Boucard A.A."/>
            <person name="Bolliger M.F."/>
            <person name="Nguyen J."/>
            <person name="Soltis S.M."/>
            <person name="Sudhof T.C."/>
            <person name="Brunger A.T."/>
        </authorList>
    </citation>
    <scope>PROTEOLYTIC PROCESSING</scope>
</reference>
<reference key="13">
    <citation type="journal article" date="2012" name="Oncogene">
        <title>A proprotein convertase/MMP-14 proteolytic cascade releases a novel 40 kDa vasculostatin from tumor suppressor BAI1.</title>
        <authorList>
            <person name="Cork S.M."/>
            <person name="Kaur B."/>
            <person name="Devi N.S."/>
            <person name="Cooper L."/>
            <person name="Saltz J.H."/>
            <person name="Sandberg E.M."/>
            <person name="Kaluz S."/>
            <person name="Van Meir E.G."/>
        </authorList>
    </citation>
    <scope>FUNCTION (VASCULOSTATIN-40)</scope>
    <scope>SUBCELLULAR LOCATION (VASCULOSTATIN-40 AND VASCULOSTATIN-120)</scope>
    <scope>PROTEOLYTIC PROCESSING</scope>
    <scope>MUTAGENESIS OF 323-ARG--GLN-325; 326-SER--ARG-328 AND SER-927</scope>
</reference>
<reference key="14">
    <citation type="journal article" date="2013" name="J. Biol. Chem.">
        <title>Brain-specific angiogenesis inhibitor-1 signaling, regulation, and enrichment in the postsynaptic density.</title>
        <authorList>
            <person name="Stephenson J.R."/>
            <person name="Paavola K.J."/>
            <person name="Schaefer S.A."/>
            <person name="Kaur B."/>
            <person name="Van Meir E.G."/>
            <person name="Hall R.A."/>
        </authorList>
    </citation>
    <scope>FUNCTION</scope>
    <scope>INTERACTION WITH ARRB2 AND DLG4</scope>
    <scope>UBIQUITINATION</scope>
</reference>
<reference key="15">
    <citation type="journal article" date="2013" name="J. Neurosci.">
        <title>The adhesion-GPCR BAI1 regulates synaptogenesis by controlling the recruitment of the Par3/Tiam1 polarity complex to synaptic sites.</title>
        <authorList>
            <person name="Duman J.G."/>
            <person name="Tzeng C.P."/>
            <person name="Tu Y.K."/>
            <person name="Munjal T."/>
            <person name="Schwechter B."/>
            <person name="Ho T.S."/>
            <person name="Tolias K.F."/>
        </authorList>
    </citation>
    <scope>INTERACTION WITH PARD3 AND TIAM1</scope>
</reference>
<reference key="16">
    <citation type="journal article" date="2013" name="J. Proteome Res.">
        <title>Toward a comprehensive characterization of a human cancer cell phosphoproteome.</title>
        <authorList>
            <person name="Zhou H."/>
            <person name="Di Palma S."/>
            <person name="Preisinger C."/>
            <person name="Peng M."/>
            <person name="Polat A.N."/>
            <person name="Heck A.J."/>
            <person name="Mohammed S."/>
        </authorList>
    </citation>
    <scope>PHOSPHORYLATION [LARGE SCALE ANALYSIS] AT THR-609</scope>
    <scope>IDENTIFICATION BY MASS SPECTROMETRY [LARGE SCALE ANALYSIS]</scope>
    <source>
        <tissue>Erythroleukemia</tissue>
    </source>
</reference>
<reference key="17">
    <citation type="journal article" date="2014" name="FASEB J.">
        <title>Brain angiogenesis inhibitor 1 is expressed by gastric phagocytes during infection with Helicobacter pylori and mediates the recognition and engulfment of human apoptotic gastric epithelial cells.</title>
        <authorList>
            <person name="Das S."/>
            <person name="Sarkar A."/>
            <person name="Ryan K.A."/>
            <person name="Fox S."/>
            <person name="Berger A.H."/>
            <person name="Juncadella I.J."/>
            <person name="Bimczok D."/>
            <person name="Smythies L.E."/>
            <person name="Harris P.R."/>
            <person name="Ravichandran K.S."/>
            <person name="Crowe S.E."/>
            <person name="Smith P.D."/>
            <person name="Ernst P.B."/>
        </authorList>
    </citation>
    <scope>FUNCTION</scope>
    <scope>TISSUE SPECIFICITY</scope>
</reference>
<reference key="18">
    <citation type="journal article" date="2016" name="J. Biol. Chem.">
        <title>Stalk-dependent and stalk-independent signaling by the adhesion G protein-coupled receptors GPR56 (ADGRG1) and BAI1 (ADGRB1).</title>
        <authorList>
            <person name="Kishore A."/>
            <person name="Purcell R.H."/>
            <person name="Nassiri-Toosi Z."/>
            <person name="Hall R.A."/>
        </authorList>
    </citation>
    <scope>ROLE OF N-TERMINAL STALK IN ACTIVITY</scope>
</reference>
<reference key="19">
    <citation type="journal article" date="2016" name="Sci. Signal.">
        <title>The adhesion GPCR BAI1 mediates macrophage ROS production and microbicidal activity against Gram-negative bacteria.</title>
        <authorList>
            <person name="Billings E.A."/>
            <person name="Lee C.S."/>
            <person name="Owen K.A."/>
            <person name="D'Souza R.S."/>
            <person name="Ravichandran K.S."/>
            <person name="Casanova J.E."/>
        </authorList>
    </citation>
    <scope>FUNCTION</scope>
    <scope>SUBCELLULAR LOCATION</scope>
</reference>